<gene>
    <name evidence="1" type="primary">ldh</name>
    <name type="ordered locus">PEPE_1554</name>
</gene>
<organism>
    <name type="scientific">Pediococcus pentosaceus (strain ATCC 25745 / CCUG 21536 / LMG 10740 / 183-1w)</name>
    <dbReference type="NCBI Taxonomy" id="278197"/>
    <lineage>
        <taxon>Bacteria</taxon>
        <taxon>Bacillati</taxon>
        <taxon>Bacillota</taxon>
        <taxon>Bacilli</taxon>
        <taxon>Lactobacillales</taxon>
        <taxon>Lactobacillaceae</taxon>
        <taxon>Pediococcus</taxon>
    </lineage>
</organism>
<name>LDH_PEDPA</name>
<keyword id="KW-0963">Cytoplasm</keyword>
<keyword id="KW-0520">NAD</keyword>
<keyword id="KW-0560">Oxidoreductase</keyword>
<keyword id="KW-0597">Phosphoprotein</keyword>
<protein>
    <recommendedName>
        <fullName evidence="1">L-lactate dehydrogenase</fullName>
        <shortName evidence="1">L-LDH</shortName>
        <ecNumber evidence="1">1.1.1.27</ecNumber>
    </recommendedName>
</protein>
<dbReference type="EC" id="1.1.1.27" evidence="1"/>
<dbReference type="EMBL" id="CP000422">
    <property type="protein sequence ID" value="ABJ68575.1"/>
    <property type="molecule type" value="Genomic_DNA"/>
</dbReference>
<dbReference type="RefSeq" id="WP_002833021.1">
    <property type="nucleotide sequence ID" value="NC_008525.1"/>
</dbReference>
<dbReference type="SMR" id="Q03DZ7"/>
<dbReference type="STRING" id="278197.PEPE_1554"/>
<dbReference type="GeneID" id="33062588"/>
<dbReference type="KEGG" id="ppe:PEPE_1554"/>
<dbReference type="eggNOG" id="COG0039">
    <property type="taxonomic scope" value="Bacteria"/>
</dbReference>
<dbReference type="HOGENOM" id="CLU_045401_1_1_9"/>
<dbReference type="OrthoDB" id="9802969at2"/>
<dbReference type="UniPathway" id="UPA00554">
    <property type="reaction ID" value="UER00611"/>
</dbReference>
<dbReference type="Proteomes" id="UP000000773">
    <property type="component" value="Chromosome"/>
</dbReference>
<dbReference type="GO" id="GO:0005737">
    <property type="term" value="C:cytoplasm"/>
    <property type="evidence" value="ECO:0007669"/>
    <property type="project" value="UniProtKB-SubCell"/>
</dbReference>
<dbReference type="GO" id="GO:0004459">
    <property type="term" value="F:L-lactate dehydrogenase activity"/>
    <property type="evidence" value="ECO:0007669"/>
    <property type="project" value="UniProtKB-UniRule"/>
</dbReference>
<dbReference type="GO" id="GO:0006096">
    <property type="term" value="P:glycolytic process"/>
    <property type="evidence" value="ECO:0007669"/>
    <property type="project" value="UniProtKB-UniRule"/>
</dbReference>
<dbReference type="GO" id="GO:0006089">
    <property type="term" value="P:lactate metabolic process"/>
    <property type="evidence" value="ECO:0007669"/>
    <property type="project" value="TreeGrafter"/>
</dbReference>
<dbReference type="CDD" id="cd05291">
    <property type="entry name" value="HicDH_like"/>
    <property type="match status" value="1"/>
</dbReference>
<dbReference type="FunFam" id="3.40.50.720:FF:000018">
    <property type="entry name" value="Malate dehydrogenase"/>
    <property type="match status" value="1"/>
</dbReference>
<dbReference type="Gene3D" id="3.90.110.10">
    <property type="entry name" value="Lactate dehydrogenase/glycoside hydrolase, family 4, C-terminal"/>
    <property type="match status" value="1"/>
</dbReference>
<dbReference type="Gene3D" id="3.40.50.720">
    <property type="entry name" value="NAD(P)-binding Rossmann-like Domain"/>
    <property type="match status" value="1"/>
</dbReference>
<dbReference type="HAMAP" id="MF_00488">
    <property type="entry name" value="Lactate_dehydrog"/>
    <property type="match status" value="1"/>
</dbReference>
<dbReference type="InterPro" id="IPR001557">
    <property type="entry name" value="L-lactate/malate_DH"/>
</dbReference>
<dbReference type="InterPro" id="IPR011304">
    <property type="entry name" value="L-lactate_DH"/>
</dbReference>
<dbReference type="InterPro" id="IPR018177">
    <property type="entry name" value="L-lactate_DH_AS"/>
</dbReference>
<dbReference type="InterPro" id="IPR022383">
    <property type="entry name" value="Lactate/malate_DH_C"/>
</dbReference>
<dbReference type="InterPro" id="IPR001236">
    <property type="entry name" value="Lactate/malate_DH_N"/>
</dbReference>
<dbReference type="InterPro" id="IPR015955">
    <property type="entry name" value="Lactate_DH/Glyco_Ohase_4_C"/>
</dbReference>
<dbReference type="InterPro" id="IPR036291">
    <property type="entry name" value="NAD(P)-bd_dom_sf"/>
</dbReference>
<dbReference type="NCBIfam" id="TIGR01771">
    <property type="entry name" value="L-LDH-NAD"/>
    <property type="match status" value="1"/>
</dbReference>
<dbReference type="NCBIfam" id="NF000824">
    <property type="entry name" value="PRK00066.1"/>
    <property type="match status" value="1"/>
</dbReference>
<dbReference type="PANTHER" id="PTHR43128">
    <property type="entry name" value="L-2-HYDROXYCARBOXYLATE DEHYDROGENASE (NAD(P)(+))"/>
    <property type="match status" value="1"/>
</dbReference>
<dbReference type="PANTHER" id="PTHR43128:SF16">
    <property type="entry name" value="L-LACTATE DEHYDROGENASE"/>
    <property type="match status" value="1"/>
</dbReference>
<dbReference type="Pfam" id="PF02866">
    <property type="entry name" value="Ldh_1_C"/>
    <property type="match status" value="1"/>
</dbReference>
<dbReference type="Pfam" id="PF00056">
    <property type="entry name" value="Ldh_1_N"/>
    <property type="match status" value="1"/>
</dbReference>
<dbReference type="PIRSF" id="PIRSF000102">
    <property type="entry name" value="Lac_mal_DH"/>
    <property type="match status" value="1"/>
</dbReference>
<dbReference type="PRINTS" id="PR00086">
    <property type="entry name" value="LLDHDRGNASE"/>
</dbReference>
<dbReference type="SUPFAM" id="SSF56327">
    <property type="entry name" value="LDH C-terminal domain-like"/>
    <property type="match status" value="1"/>
</dbReference>
<dbReference type="SUPFAM" id="SSF51735">
    <property type="entry name" value="NAD(P)-binding Rossmann-fold domains"/>
    <property type="match status" value="1"/>
</dbReference>
<dbReference type="PROSITE" id="PS00064">
    <property type="entry name" value="L_LDH"/>
    <property type="match status" value="1"/>
</dbReference>
<evidence type="ECO:0000255" key="1">
    <source>
        <dbReference type="HAMAP-Rule" id="MF_00488"/>
    </source>
</evidence>
<feature type="chain" id="PRO_1000026507" description="L-lactate dehydrogenase">
    <location>
        <begin position="1"/>
        <end position="320"/>
    </location>
</feature>
<feature type="active site" description="Proton acceptor" evidence="1">
    <location>
        <position position="179"/>
    </location>
</feature>
<feature type="binding site" evidence="1">
    <location>
        <position position="18"/>
    </location>
    <ligand>
        <name>NAD(+)</name>
        <dbReference type="ChEBI" id="CHEBI:57540"/>
    </ligand>
</feature>
<feature type="binding site" evidence="1">
    <location>
        <position position="39"/>
    </location>
    <ligand>
        <name>NAD(+)</name>
        <dbReference type="ChEBI" id="CHEBI:57540"/>
    </ligand>
</feature>
<feature type="binding site" evidence="1">
    <location>
        <position position="44"/>
    </location>
    <ligand>
        <name>NAD(+)</name>
        <dbReference type="ChEBI" id="CHEBI:57540"/>
    </ligand>
</feature>
<feature type="binding site" evidence="1">
    <location>
        <position position="69"/>
    </location>
    <ligand>
        <name>NAD(+)</name>
        <dbReference type="ChEBI" id="CHEBI:57540"/>
    </ligand>
</feature>
<feature type="binding site" evidence="1">
    <location>
        <begin position="83"/>
        <end position="84"/>
    </location>
    <ligand>
        <name>NAD(+)</name>
        <dbReference type="ChEBI" id="CHEBI:57540"/>
    </ligand>
</feature>
<feature type="binding site" evidence="1">
    <location>
        <position position="86"/>
    </location>
    <ligand>
        <name>substrate</name>
    </ligand>
</feature>
<feature type="binding site" evidence="1">
    <location>
        <position position="92"/>
    </location>
    <ligand>
        <name>substrate</name>
    </ligand>
</feature>
<feature type="binding site" evidence="1">
    <location>
        <position position="105"/>
    </location>
    <ligand>
        <name>NAD(+)</name>
        <dbReference type="ChEBI" id="CHEBI:57540"/>
    </ligand>
</feature>
<feature type="binding site" evidence="1">
    <location>
        <begin position="122"/>
        <end position="124"/>
    </location>
    <ligand>
        <name>NAD(+)</name>
        <dbReference type="ChEBI" id="CHEBI:57540"/>
    </ligand>
</feature>
<feature type="binding site" evidence="1">
    <location>
        <begin position="124"/>
        <end position="127"/>
    </location>
    <ligand>
        <name>substrate</name>
    </ligand>
</feature>
<feature type="binding site" evidence="1">
    <location>
        <position position="147"/>
    </location>
    <ligand>
        <name>NAD(+)</name>
        <dbReference type="ChEBI" id="CHEBI:57540"/>
    </ligand>
</feature>
<feature type="binding site" evidence="1">
    <location>
        <begin position="152"/>
        <end position="155"/>
    </location>
    <ligand>
        <name>substrate</name>
    </ligand>
</feature>
<feature type="binding site" evidence="1">
    <location>
        <position position="232"/>
    </location>
    <ligand>
        <name>substrate</name>
    </ligand>
</feature>
<feature type="modified residue" description="Phosphotyrosine" evidence="1">
    <location>
        <position position="223"/>
    </location>
</feature>
<comment type="function">
    <text evidence="1">Catalyzes the conversion of lactate to pyruvate.</text>
</comment>
<comment type="catalytic activity">
    <reaction evidence="1">
        <text>(S)-lactate + NAD(+) = pyruvate + NADH + H(+)</text>
        <dbReference type="Rhea" id="RHEA:23444"/>
        <dbReference type="ChEBI" id="CHEBI:15361"/>
        <dbReference type="ChEBI" id="CHEBI:15378"/>
        <dbReference type="ChEBI" id="CHEBI:16651"/>
        <dbReference type="ChEBI" id="CHEBI:57540"/>
        <dbReference type="ChEBI" id="CHEBI:57945"/>
        <dbReference type="EC" id="1.1.1.27"/>
    </reaction>
</comment>
<comment type="pathway">
    <text evidence="1">Fermentation; pyruvate fermentation to lactate; (S)-lactate from pyruvate: step 1/1.</text>
</comment>
<comment type="subunit">
    <text evidence="1">Homotetramer.</text>
</comment>
<comment type="subcellular location">
    <subcellularLocation>
        <location evidence="1">Cytoplasm</location>
    </subcellularLocation>
</comment>
<comment type="similarity">
    <text evidence="1">Belongs to the LDH/MDH superfamily. LDH family.</text>
</comment>
<sequence length="320" mass="34284">MSKIQNHQKVVLVGDGAVGSSYAFAMAQQGIAEEFVIVDVVKDRTVGDALDLEDATPFTAPKNIYSGEYSDCKDADLVVITAGAPQKPGETRLDLVNKNLNILSTIVKPVVDSGFDGIFLVAANPVDILTYATWKFSGFPKEKVIGSGISLDSARLRVALGKKFNVSPDSVDAYIMGEHGDSEFAAYSTASIGTKPLLDIAKEEGVSTDELAEIEDSVRNKAYEIINKKGATFYGVGTALMRISKAILRDENAVLPVGAYMDGEYGLNDIYIGTPAVINGQGLNRVIESPLSDDEMKKMTDSATTLKKVLTDGLKALEEK</sequence>
<accession>Q03DZ7</accession>
<reference key="1">
    <citation type="journal article" date="2006" name="Proc. Natl. Acad. Sci. U.S.A.">
        <title>Comparative genomics of the lactic acid bacteria.</title>
        <authorList>
            <person name="Makarova K.S."/>
            <person name="Slesarev A."/>
            <person name="Wolf Y.I."/>
            <person name="Sorokin A."/>
            <person name="Mirkin B."/>
            <person name="Koonin E.V."/>
            <person name="Pavlov A."/>
            <person name="Pavlova N."/>
            <person name="Karamychev V."/>
            <person name="Polouchine N."/>
            <person name="Shakhova V."/>
            <person name="Grigoriev I."/>
            <person name="Lou Y."/>
            <person name="Rohksar D."/>
            <person name="Lucas S."/>
            <person name="Huang K."/>
            <person name="Goodstein D.M."/>
            <person name="Hawkins T."/>
            <person name="Plengvidhya V."/>
            <person name="Welker D."/>
            <person name="Hughes J."/>
            <person name="Goh Y."/>
            <person name="Benson A."/>
            <person name="Baldwin K."/>
            <person name="Lee J.-H."/>
            <person name="Diaz-Muniz I."/>
            <person name="Dosti B."/>
            <person name="Smeianov V."/>
            <person name="Wechter W."/>
            <person name="Barabote R."/>
            <person name="Lorca G."/>
            <person name="Altermann E."/>
            <person name="Barrangou R."/>
            <person name="Ganesan B."/>
            <person name="Xie Y."/>
            <person name="Rawsthorne H."/>
            <person name="Tamir D."/>
            <person name="Parker C."/>
            <person name="Breidt F."/>
            <person name="Broadbent J.R."/>
            <person name="Hutkins R."/>
            <person name="O'Sullivan D."/>
            <person name="Steele J."/>
            <person name="Unlu G."/>
            <person name="Saier M.H. Jr."/>
            <person name="Klaenhammer T."/>
            <person name="Richardson P."/>
            <person name="Kozyavkin S."/>
            <person name="Weimer B.C."/>
            <person name="Mills D.A."/>
        </authorList>
    </citation>
    <scope>NUCLEOTIDE SEQUENCE [LARGE SCALE GENOMIC DNA]</scope>
    <source>
        <strain>ATCC 25745 / CCUG 21536 / LMG 10740 / 183-1w</strain>
    </source>
</reference>
<proteinExistence type="inferred from homology"/>